<comment type="function">
    <text evidence="1">Performs an essential function in the generation of cytoplasmic iron-sulfur proteins by mediating the ATP-dependent export of Fe/S cluster precursors synthesized by egt-3 and other mitochondrial proteins (By similarity). Hydrolyzes ATP (By similarity). Binds glutathione and may function by transporting a glutathione-conjugated iron-sulfur compound (By similarity).</text>
</comment>
<comment type="subunit">
    <text evidence="1">Homodimer.</text>
</comment>
<comment type="subcellular location">
    <subcellularLocation>
        <location evidence="1">Mitochondrion inner membrane</location>
        <topology evidence="6">Multi-pass membrane protein</topology>
    </subcellularLocation>
</comment>
<comment type="similarity">
    <text evidence="8">Belongs to the ABC transporter superfamily. ABCB family. Heavy Metal importer (TC 3.A.1.210) subfamily.</text>
</comment>
<accession>Q7RX59</accession>
<evidence type="ECO:0000250" key="1">
    <source>
        <dbReference type="UniProtKB" id="P40416"/>
    </source>
</evidence>
<evidence type="ECO:0000250" key="2">
    <source>
        <dbReference type="UniProtKB" id="Q2G506"/>
    </source>
</evidence>
<evidence type="ECO:0000250" key="3">
    <source>
        <dbReference type="UniProtKB" id="Q9NP58"/>
    </source>
</evidence>
<evidence type="ECO:0000255" key="4"/>
<evidence type="ECO:0000255" key="5">
    <source>
        <dbReference type="PROSITE-ProRule" id="PRU00434"/>
    </source>
</evidence>
<evidence type="ECO:0000255" key="6">
    <source>
        <dbReference type="PROSITE-ProRule" id="PRU00441"/>
    </source>
</evidence>
<evidence type="ECO:0000256" key="7">
    <source>
        <dbReference type="SAM" id="MobiDB-lite"/>
    </source>
</evidence>
<evidence type="ECO:0000305" key="8"/>
<organism>
    <name type="scientific">Neurospora crassa (strain ATCC 24698 / 74-OR23-1A / CBS 708.71 / DSM 1257 / FGSC 987)</name>
    <dbReference type="NCBI Taxonomy" id="367110"/>
    <lineage>
        <taxon>Eukaryota</taxon>
        <taxon>Fungi</taxon>
        <taxon>Dikarya</taxon>
        <taxon>Ascomycota</taxon>
        <taxon>Pezizomycotina</taxon>
        <taxon>Sordariomycetes</taxon>
        <taxon>Sordariomycetidae</taxon>
        <taxon>Sordariales</taxon>
        <taxon>Sordariaceae</taxon>
        <taxon>Neurospora</taxon>
    </lineage>
</organism>
<sequence length="716" mass="78758">MAPSIKLSTMATSLHRAHGTSALLRRPRLWAPRLSSIHATPTIANLRASFTTSSPRLFAPNGSAKDESKPAVSTVPKTTGRGPSDPLAAIDKTAQEQRKADWAIMKEMSKYLWPKGSWGDKARVLLAIGLLVGGKVLNVQVPFYFREIVDSLNIDFSTTGGSVTAVAGAMILGYGAARVGAVVSQELRNAVFASVAQKAIRKVARNTFEHLLNLDLSFHLSKQTGGLTRAIDRGTKGISFLLTSMVFHIVPTALEISMVCGILTYNFGWQYAALTALTMVSYTAFTILTTAWRTKFRRQANAADNKASTIAVDSLINYEAVKYFNNEAYEVGRYDKALAQYEKNSIKVATSLAFLNSGQNIIFSSALTVMMYMGAHGVATGQLTVGDLVLINQLVFQLSVPLNFLGSVYRELRQSLLDMETLFNLQKVNVTIKEQPNAKPLTLTRGGEIEFKDVTFGYHPESPILRDLSLTIPAGKKVAIVGPSGCGKSTLLRLLFRFYDPQKGAIYIDGQDIRSVTLESLRRAIGVVPQDTPLFNDTVEHNIRYGNLSATPEQVIEAAKAAHIHEKIISWRDGYNTKVGERGLMISGGEKQRLAVSRLILKDPPLLFFDEATSALDTHTEQALMENINAILKGLGQKGEKKTSLFVAHRLRTIYDSDLIIVLKEGRVAEQGTHRELMERNGVYAQLWRAQEMLMTEEGEVSKKGEKEEVGEKKEA</sequence>
<dbReference type="EC" id="7.-.-.-" evidence="2"/>
<dbReference type="EMBL" id="CM002241">
    <property type="protein sequence ID" value="EAA27101.3"/>
    <property type="molecule type" value="Genomic_DNA"/>
</dbReference>
<dbReference type="RefSeq" id="XP_956337.3">
    <property type="nucleotide sequence ID" value="XM_951244.3"/>
</dbReference>
<dbReference type="SMR" id="Q7RX59"/>
<dbReference type="FunCoup" id="Q7RX59">
    <property type="interactions" value="664"/>
</dbReference>
<dbReference type="STRING" id="367110.Q7RX59"/>
<dbReference type="PaxDb" id="5141-EFNCRP00000001563"/>
<dbReference type="EnsemblFungi" id="EAA27101">
    <property type="protein sequence ID" value="EAA27101"/>
    <property type="gene ID" value="NCU05029"/>
</dbReference>
<dbReference type="GeneID" id="3872484"/>
<dbReference type="KEGG" id="ncr:NCU05029"/>
<dbReference type="VEuPathDB" id="FungiDB:NCU05029"/>
<dbReference type="HOGENOM" id="CLU_000604_84_1_1"/>
<dbReference type="InParanoid" id="Q7RX59"/>
<dbReference type="OrthoDB" id="6500128at2759"/>
<dbReference type="Proteomes" id="UP000001805">
    <property type="component" value="Chromosome 5, Linkage Group VI"/>
</dbReference>
<dbReference type="GO" id="GO:0005743">
    <property type="term" value="C:mitochondrial inner membrane"/>
    <property type="evidence" value="ECO:0000318"/>
    <property type="project" value="GO_Central"/>
</dbReference>
<dbReference type="GO" id="GO:0140359">
    <property type="term" value="F:ABC-type transporter activity"/>
    <property type="evidence" value="ECO:0007669"/>
    <property type="project" value="InterPro"/>
</dbReference>
<dbReference type="GO" id="GO:0005524">
    <property type="term" value="F:ATP binding"/>
    <property type="evidence" value="ECO:0007669"/>
    <property type="project" value="UniProtKB-KW"/>
</dbReference>
<dbReference type="GO" id="GO:0016887">
    <property type="term" value="F:ATP hydrolysis activity"/>
    <property type="evidence" value="ECO:0007669"/>
    <property type="project" value="InterPro"/>
</dbReference>
<dbReference type="GO" id="GO:0042626">
    <property type="term" value="F:ATPase-coupled transmembrane transporter activity"/>
    <property type="evidence" value="ECO:0000318"/>
    <property type="project" value="GO_Central"/>
</dbReference>
<dbReference type="GO" id="GO:0006879">
    <property type="term" value="P:intracellular iron ion homeostasis"/>
    <property type="evidence" value="ECO:0000318"/>
    <property type="project" value="GO_Central"/>
</dbReference>
<dbReference type="GO" id="GO:0055085">
    <property type="term" value="P:transmembrane transport"/>
    <property type="evidence" value="ECO:0000318"/>
    <property type="project" value="GO_Central"/>
</dbReference>
<dbReference type="CDD" id="cd18582">
    <property type="entry name" value="ABC_6TM_ATM1_ABCB7"/>
    <property type="match status" value="1"/>
</dbReference>
<dbReference type="CDD" id="cd03253">
    <property type="entry name" value="ABCC_ATM1_transporter"/>
    <property type="match status" value="1"/>
</dbReference>
<dbReference type="FunFam" id="1.20.1560.10:FF:000004">
    <property type="entry name" value="ATP-binding cassette sub-family B member 7"/>
    <property type="match status" value="1"/>
</dbReference>
<dbReference type="FunFam" id="3.40.50.300:FF:000186">
    <property type="entry name" value="ATP-binding cassette sub-family B member 7, mitochondrial"/>
    <property type="match status" value="1"/>
</dbReference>
<dbReference type="Gene3D" id="1.20.1560.10">
    <property type="entry name" value="ABC transporter type 1, transmembrane domain"/>
    <property type="match status" value="1"/>
</dbReference>
<dbReference type="Gene3D" id="3.40.50.300">
    <property type="entry name" value="P-loop containing nucleotide triphosphate hydrolases"/>
    <property type="match status" value="1"/>
</dbReference>
<dbReference type="InterPro" id="IPR003593">
    <property type="entry name" value="AAA+_ATPase"/>
</dbReference>
<dbReference type="InterPro" id="IPR011527">
    <property type="entry name" value="ABC1_TM_dom"/>
</dbReference>
<dbReference type="InterPro" id="IPR036640">
    <property type="entry name" value="ABC1_TM_sf"/>
</dbReference>
<dbReference type="InterPro" id="IPR003439">
    <property type="entry name" value="ABC_transporter-like_ATP-bd"/>
</dbReference>
<dbReference type="InterPro" id="IPR017871">
    <property type="entry name" value="ABC_transporter-like_CS"/>
</dbReference>
<dbReference type="InterPro" id="IPR027417">
    <property type="entry name" value="P-loop_NTPase"/>
</dbReference>
<dbReference type="InterPro" id="IPR039421">
    <property type="entry name" value="Type_1_exporter"/>
</dbReference>
<dbReference type="PANTHER" id="PTHR24221">
    <property type="entry name" value="ATP-BINDING CASSETTE SUB-FAMILY B"/>
    <property type="match status" value="1"/>
</dbReference>
<dbReference type="PANTHER" id="PTHR24221:SF402">
    <property type="entry name" value="IRON-SULFUR CLUSTERS TRANSPORTER ABCB7, MITOCHONDRIAL"/>
    <property type="match status" value="1"/>
</dbReference>
<dbReference type="Pfam" id="PF00664">
    <property type="entry name" value="ABC_membrane"/>
    <property type="match status" value="1"/>
</dbReference>
<dbReference type="Pfam" id="PF00005">
    <property type="entry name" value="ABC_tran"/>
    <property type="match status" value="1"/>
</dbReference>
<dbReference type="SMART" id="SM00382">
    <property type="entry name" value="AAA"/>
    <property type="match status" value="1"/>
</dbReference>
<dbReference type="SUPFAM" id="SSF90123">
    <property type="entry name" value="ABC transporter transmembrane region"/>
    <property type="match status" value="1"/>
</dbReference>
<dbReference type="SUPFAM" id="SSF52540">
    <property type="entry name" value="P-loop containing nucleoside triphosphate hydrolases"/>
    <property type="match status" value="1"/>
</dbReference>
<dbReference type="PROSITE" id="PS50929">
    <property type="entry name" value="ABC_TM1F"/>
    <property type="match status" value="1"/>
</dbReference>
<dbReference type="PROSITE" id="PS00211">
    <property type="entry name" value="ABC_TRANSPORTER_1"/>
    <property type="match status" value="1"/>
</dbReference>
<dbReference type="PROSITE" id="PS50893">
    <property type="entry name" value="ABC_TRANSPORTER_2"/>
    <property type="match status" value="1"/>
</dbReference>
<name>ATM1_NEUCR</name>
<keyword id="KW-0067">ATP-binding</keyword>
<keyword id="KW-0472">Membrane</keyword>
<keyword id="KW-0496">Mitochondrion</keyword>
<keyword id="KW-0999">Mitochondrion inner membrane</keyword>
<keyword id="KW-0547">Nucleotide-binding</keyword>
<keyword id="KW-1185">Reference proteome</keyword>
<keyword id="KW-0809">Transit peptide</keyword>
<keyword id="KW-1278">Translocase</keyword>
<keyword id="KW-0812">Transmembrane</keyword>
<keyword id="KW-1133">Transmembrane helix</keyword>
<keyword id="KW-0813">Transport</keyword>
<reference key="1">
    <citation type="journal article" date="2003" name="Nature">
        <title>The genome sequence of the filamentous fungus Neurospora crassa.</title>
        <authorList>
            <person name="Galagan J.E."/>
            <person name="Calvo S.E."/>
            <person name="Borkovich K.A."/>
            <person name="Selker E.U."/>
            <person name="Read N.D."/>
            <person name="Jaffe D.B."/>
            <person name="FitzHugh W."/>
            <person name="Ma L.-J."/>
            <person name="Smirnov S."/>
            <person name="Purcell S."/>
            <person name="Rehman B."/>
            <person name="Elkins T."/>
            <person name="Engels R."/>
            <person name="Wang S."/>
            <person name="Nielsen C.B."/>
            <person name="Butler J."/>
            <person name="Endrizzi M."/>
            <person name="Qui D."/>
            <person name="Ianakiev P."/>
            <person name="Bell-Pedersen D."/>
            <person name="Nelson M.A."/>
            <person name="Werner-Washburne M."/>
            <person name="Selitrennikoff C.P."/>
            <person name="Kinsey J.A."/>
            <person name="Braun E.L."/>
            <person name="Zelter A."/>
            <person name="Schulte U."/>
            <person name="Kothe G.O."/>
            <person name="Jedd G."/>
            <person name="Mewes H.-W."/>
            <person name="Staben C."/>
            <person name="Marcotte E."/>
            <person name="Greenberg D."/>
            <person name="Roy A."/>
            <person name="Foley K."/>
            <person name="Naylor J."/>
            <person name="Stange-Thomann N."/>
            <person name="Barrett R."/>
            <person name="Gnerre S."/>
            <person name="Kamal M."/>
            <person name="Kamvysselis M."/>
            <person name="Mauceli E.W."/>
            <person name="Bielke C."/>
            <person name="Rudd S."/>
            <person name="Frishman D."/>
            <person name="Krystofova S."/>
            <person name="Rasmussen C."/>
            <person name="Metzenberg R.L."/>
            <person name="Perkins D.D."/>
            <person name="Kroken S."/>
            <person name="Cogoni C."/>
            <person name="Macino G."/>
            <person name="Catcheside D.E.A."/>
            <person name="Li W."/>
            <person name="Pratt R.J."/>
            <person name="Osmani S.A."/>
            <person name="DeSouza C.P.C."/>
            <person name="Glass N.L."/>
            <person name="Orbach M.J."/>
            <person name="Berglund J.A."/>
            <person name="Voelker R."/>
            <person name="Yarden O."/>
            <person name="Plamann M."/>
            <person name="Seiler S."/>
            <person name="Dunlap J.C."/>
            <person name="Radford A."/>
            <person name="Aramayo R."/>
            <person name="Natvig D.O."/>
            <person name="Alex L.A."/>
            <person name="Mannhaupt G."/>
            <person name="Ebbole D.J."/>
            <person name="Freitag M."/>
            <person name="Paulsen I."/>
            <person name="Sachs M.S."/>
            <person name="Lander E.S."/>
            <person name="Nusbaum C."/>
            <person name="Birren B.W."/>
        </authorList>
    </citation>
    <scope>NUCLEOTIDE SEQUENCE [LARGE SCALE GENOMIC DNA]</scope>
    <source>
        <strain>ATCC 24698 / 74-OR23-1A / CBS 708.71 / DSM 1257 / FGSC 987</strain>
    </source>
</reference>
<protein>
    <recommendedName>
        <fullName evidence="8">Iron-sulfur clusters transporter atm1, mitochondrial</fullName>
        <ecNumber evidence="2">7.-.-.-</ecNumber>
    </recommendedName>
    <alternativeName>
        <fullName>Iron-sulfur protein 4</fullName>
    </alternativeName>
</protein>
<feature type="transit peptide" description="Mitochondrion" evidence="4">
    <location>
        <begin position="1"/>
        <end position="18"/>
    </location>
</feature>
<feature type="chain" id="PRO_0000255448" description="Iron-sulfur clusters transporter atm1, mitochondrial">
    <location>
        <begin position="19"/>
        <end position="716"/>
    </location>
</feature>
<feature type="topological domain" description="Mitochondrial matrix" evidence="1">
    <location>
        <begin position="19"/>
        <end position="123"/>
    </location>
</feature>
<feature type="transmembrane region" description="Helical" evidence="6">
    <location>
        <begin position="124"/>
        <end position="145"/>
    </location>
</feature>
<feature type="topological domain" description="Mitochondrial intermembrane" evidence="1">
    <location>
        <begin position="146"/>
        <end position="168"/>
    </location>
</feature>
<feature type="transmembrane region" description="Helical" evidence="6">
    <location>
        <begin position="169"/>
        <end position="192"/>
    </location>
</feature>
<feature type="topological domain" description="Mitochondrial matrix" evidence="1">
    <location>
        <begin position="193"/>
        <end position="241"/>
    </location>
</feature>
<feature type="transmembrane region" description="Helical" evidence="6">
    <location>
        <begin position="242"/>
        <end position="265"/>
    </location>
</feature>
<feature type="topological domain" description="Mitochondrial intermembrane" evidence="1">
    <location>
        <position position="266"/>
    </location>
</feature>
<feature type="transmembrane region" description="Helical" evidence="6">
    <location>
        <begin position="267"/>
        <end position="287"/>
    </location>
</feature>
<feature type="topological domain" description="Mitochondrial matrix" evidence="1">
    <location>
        <begin position="288"/>
        <end position="353"/>
    </location>
</feature>
<feature type="transmembrane region" description="Helical" evidence="6">
    <location>
        <begin position="354"/>
        <end position="372"/>
    </location>
</feature>
<feature type="topological domain" description="Mitochondrial intermembrane" evidence="1">
    <location>
        <begin position="373"/>
        <end position="387"/>
    </location>
</feature>
<feature type="transmembrane region" description="Helical" evidence="6">
    <location>
        <begin position="388"/>
        <end position="409"/>
    </location>
</feature>
<feature type="topological domain" description="Mitochondrial matrix" evidence="1">
    <location>
        <begin position="410"/>
        <end position="716"/>
    </location>
</feature>
<feature type="domain" description="ABC transmembrane type-1" evidence="6">
    <location>
        <begin position="124"/>
        <end position="414"/>
    </location>
</feature>
<feature type="domain" description="ABC transporter" evidence="5">
    <location>
        <begin position="449"/>
        <end position="690"/>
    </location>
</feature>
<feature type="region of interest" description="Disordered" evidence="7">
    <location>
        <begin position="57"/>
        <end position="87"/>
    </location>
</feature>
<feature type="region of interest" description="Disordered" evidence="7">
    <location>
        <begin position="697"/>
        <end position="716"/>
    </location>
</feature>
<feature type="compositionally biased region" description="Basic and acidic residues" evidence="7">
    <location>
        <begin position="700"/>
        <end position="716"/>
    </location>
</feature>
<feature type="binding site" evidence="1">
    <location>
        <begin position="293"/>
        <end position="297"/>
    </location>
    <ligand>
        <name>glutathione</name>
        <dbReference type="ChEBI" id="CHEBI:57925"/>
    </ligand>
</feature>
<feature type="binding site" evidence="1">
    <location>
        <begin position="356"/>
        <end position="359"/>
    </location>
    <ligand>
        <name>glutathione</name>
        <dbReference type="ChEBI" id="CHEBI:57925"/>
    </ligand>
</feature>
<feature type="binding site" evidence="2">
    <location>
        <position position="406"/>
    </location>
    <ligand>
        <name>glutathione</name>
        <dbReference type="ChEBI" id="CHEBI:57925"/>
    </ligand>
</feature>
<feature type="binding site" evidence="3">
    <location>
        <position position="458"/>
    </location>
    <ligand>
        <name>ATP</name>
        <dbReference type="ChEBI" id="CHEBI:30616"/>
    </ligand>
</feature>
<feature type="binding site" evidence="5">
    <location>
        <begin position="482"/>
        <end position="493"/>
    </location>
    <ligand>
        <name>ATP</name>
        <dbReference type="ChEBI" id="CHEBI:30616"/>
    </ligand>
</feature>
<gene>
    <name evidence="8" type="primary">fes-4</name>
    <name evidence="8" type="synonym">atm1</name>
    <name type="ORF">NCU05029</name>
</gene>
<proteinExistence type="inferred from homology"/>